<dbReference type="EC" id="4.2.1.9" evidence="1"/>
<dbReference type="EMBL" id="CP001614">
    <property type="protein sequence ID" value="ACR11853.1"/>
    <property type="molecule type" value="Genomic_DNA"/>
</dbReference>
<dbReference type="RefSeq" id="WP_015817964.1">
    <property type="nucleotide sequence ID" value="NC_012997.1"/>
</dbReference>
<dbReference type="SMR" id="C5BMB1"/>
<dbReference type="STRING" id="377629.TERTU_0374"/>
<dbReference type="KEGG" id="ttu:TERTU_0374"/>
<dbReference type="eggNOG" id="COG0129">
    <property type="taxonomic scope" value="Bacteria"/>
</dbReference>
<dbReference type="HOGENOM" id="CLU_014271_4_2_6"/>
<dbReference type="OrthoDB" id="9807077at2"/>
<dbReference type="UniPathway" id="UPA00047">
    <property type="reaction ID" value="UER00057"/>
</dbReference>
<dbReference type="UniPathway" id="UPA00049">
    <property type="reaction ID" value="UER00061"/>
</dbReference>
<dbReference type="Proteomes" id="UP000009080">
    <property type="component" value="Chromosome"/>
</dbReference>
<dbReference type="GO" id="GO:0005829">
    <property type="term" value="C:cytosol"/>
    <property type="evidence" value="ECO:0007669"/>
    <property type="project" value="TreeGrafter"/>
</dbReference>
<dbReference type="GO" id="GO:0051537">
    <property type="term" value="F:2 iron, 2 sulfur cluster binding"/>
    <property type="evidence" value="ECO:0007669"/>
    <property type="project" value="UniProtKB-UniRule"/>
</dbReference>
<dbReference type="GO" id="GO:0004160">
    <property type="term" value="F:dihydroxy-acid dehydratase activity"/>
    <property type="evidence" value="ECO:0007669"/>
    <property type="project" value="UniProtKB-UniRule"/>
</dbReference>
<dbReference type="GO" id="GO:0000287">
    <property type="term" value="F:magnesium ion binding"/>
    <property type="evidence" value="ECO:0007669"/>
    <property type="project" value="UniProtKB-UniRule"/>
</dbReference>
<dbReference type="GO" id="GO:0009097">
    <property type="term" value="P:isoleucine biosynthetic process"/>
    <property type="evidence" value="ECO:0007669"/>
    <property type="project" value="UniProtKB-UniRule"/>
</dbReference>
<dbReference type="GO" id="GO:0009099">
    <property type="term" value="P:L-valine biosynthetic process"/>
    <property type="evidence" value="ECO:0007669"/>
    <property type="project" value="UniProtKB-UniRule"/>
</dbReference>
<dbReference type="FunFam" id="3.50.30.80:FF:000001">
    <property type="entry name" value="Dihydroxy-acid dehydratase"/>
    <property type="match status" value="1"/>
</dbReference>
<dbReference type="Gene3D" id="3.50.30.80">
    <property type="entry name" value="IlvD/EDD C-terminal domain-like"/>
    <property type="match status" value="1"/>
</dbReference>
<dbReference type="HAMAP" id="MF_00012">
    <property type="entry name" value="IlvD"/>
    <property type="match status" value="1"/>
</dbReference>
<dbReference type="InterPro" id="IPR042096">
    <property type="entry name" value="Dihydro-acid_dehy_C"/>
</dbReference>
<dbReference type="InterPro" id="IPR004404">
    <property type="entry name" value="DihydroxyA_deHydtase"/>
</dbReference>
<dbReference type="InterPro" id="IPR020558">
    <property type="entry name" value="DiOHA_6PGluconate_deHydtase_CS"/>
</dbReference>
<dbReference type="InterPro" id="IPR056740">
    <property type="entry name" value="ILV_EDD_C"/>
</dbReference>
<dbReference type="InterPro" id="IPR000581">
    <property type="entry name" value="ILV_EDD_N"/>
</dbReference>
<dbReference type="InterPro" id="IPR037237">
    <property type="entry name" value="IlvD/EDD_N"/>
</dbReference>
<dbReference type="NCBIfam" id="TIGR00110">
    <property type="entry name" value="ilvD"/>
    <property type="match status" value="1"/>
</dbReference>
<dbReference type="NCBIfam" id="NF009103">
    <property type="entry name" value="PRK12448.1"/>
    <property type="match status" value="1"/>
</dbReference>
<dbReference type="PANTHER" id="PTHR43661">
    <property type="entry name" value="D-XYLONATE DEHYDRATASE"/>
    <property type="match status" value="1"/>
</dbReference>
<dbReference type="PANTHER" id="PTHR43661:SF3">
    <property type="entry name" value="D-XYLONATE DEHYDRATASE YAGF-RELATED"/>
    <property type="match status" value="1"/>
</dbReference>
<dbReference type="Pfam" id="PF24877">
    <property type="entry name" value="ILV_EDD_C"/>
    <property type="match status" value="1"/>
</dbReference>
<dbReference type="Pfam" id="PF00920">
    <property type="entry name" value="ILVD_EDD_N"/>
    <property type="match status" value="1"/>
</dbReference>
<dbReference type="SUPFAM" id="SSF143975">
    <property type="entry name" value="IlvD/EDD N-terminal domain-like"/>
    <property type="match status" value="1"/>
</dbReference>
<dbReference type="SUPFAM" id="SSF52016">
    <property type="entry name" value="LeuD/IlvD-like"/>
    <property type="match status" value="1"/>
</dbReference>
<dbReference type="PROSITE" id="PS00886">
    <property type="entry name" value="ILVD_EDD_1"/>
    <property type="match status" value="1"/>
</dbReference>
<dbReference type="PROSITE" id="PS00887">
    <property type="entry name" value="ILVD_EDD_2"/>
    <property type="match status" value="1"/>
</dbReference>
<protein>
    <recommendedName>
        <fullName evidence="1">Dihydroxy-acid dehydratase</fullName>
        <shortName evidence="1">DAD</shortName>
        <ecNumber evidence="1">4.2.1.9</ecNumber>
    </recommendedName>
</protein>
<gene>
    <name evidence="1" type="primary">ilvD</name>
    <name type="ordered locus">TERTU_0374</name>
</gene>
<feature type="chain" id="PRO_1000201789" description="Dihydroxy-acid dehydratase">
    <location>
        <begin position="1"/>
        <end position="612"/>
    </location>
</feature>
<feature type="active site" description="Proton acceptor" evidence="1">
    <location>
        <position position="515"/>
    </location>
</feature>
<feature type="binding site" evidence="1">
    <location>
        <position position="81"/>
    </location>
    <ligand>
        <name>Mg(2+)</name>
        <dbReference type="ChEBI" id="CHEBI:18420"/>
    </ligand>
</feature>
<feature type="binding site" evidence="1">
    <location>
        <position position="122"/>
    </location>
    <ligand>
        <name>[2Fe-2S] cluster</name>
        <dbReference type="ChEBI" id="CHEBI:190135"/>
    </ligand>
</feature>
<feature type="binding site" evidence="1">
    <location>
        <position position="123"/>
    </location>
    <ligand>
        <name>Mg(2+)</name>
        <dbReference type="ChEBI" id="CHEBI:18420"/>
    </ligand>
</feature>
<feature type="binding site" description="via carbamate group" evidence="1">
    <location>
        <position position="124"/>
    </location>
    <ligand>
        <name>Mg(2+)</name>
        <dbReference type="ChEBI" id="CHEBI:18420"/>
    </ligand>
</feature>
<feature type="binding site" evidence="1">
    <location>
        <position position="193"/>
    </location>
    <ligand>
        <name>[2Fe-2S] cluster</name>
        <dbReference type="ChEBI" id="CHEBI:190135"/>
    </ligand>
</feature>
<feature type="binding site" evidence="1">
    <location>
        <position position="489"/>
    </location>
    <ligand>
        <name>Mg(2+)</name>
        <dbReference type="ChEBI" id="CHEBI:18420"/>
    </ligand>
</feature>
<feature type="modified residue" description="N6-carboxylysine" evidence="1">
    <location>
        <position position="124"/>
    </location>
</feature>
<comment type="function">
    <text evidence="1">Functions in the biosynthesis of branched-chain amino acids. Catalyzes the dehydration of (2R,3R)-2,3-dihydroxy-3-methylpentanoate (2,3-dihydroxy-3-methylvalerate) into 2-oxo-3-methylpentanoate (2-oxo-3-methylvalerate) and of (2R)-2,3-dihydroxy-3-methylbutanoate (2,3-dihydroxyisovalerate) into 2-oxo-3-methylbutanoate (2-oxoisovalerate), the penultimate precursor to L-isoleucine and L-valine, respectively.</text>
</comment>
<comment type="catalytic activity">
    <reaction evidence="1">
        <text>(2R)-2,3-dihydroxy-3-methylbutanoate = 3-methyl-2-oxobutanoate + H2O</text>
        <dbReference type="Rhea" id="RHEA:24809"/>
        <dbReference type="ChEBI" id="CHEBI:11851"/>
        <dbReference type="ChEBI" id="CHEBI:15377"/>
        <dbReference type="ChEBI" id="CHEBI:49072"/>
        <dbReference type="EC" id="4.2.1.9"/>
    </reaction>
    <physiologicalReaction direction="left-to-right" evidence="1">
        <dbReference type="Rhea" id="RHEA:24810"/>
    </physiologicalReaction>
</comment>
<comment type="catalytic activity">
    <reaction evidence="1">
        <text>(2R,3R)-2,3-dihydroxy-3-methylpentanoate = (S)-3-methyl-2-oxopentanoate + H2O</text>
        <dbReference type="Rhea" id="RHEA:27694"/>
        <dbReference type="ChEBI" id="CHEBI:15377"/>
        <dbReference type="ChEBI" id="CHEBI:35146"/>
        <dbReference type="ChEBI" id="CHEBI:49258"/>
        <dbReference type="EC" id="4.2.1.9"/>
    </reaction>
    <physiologicalReaction direction="left-to-right" evidence="1">
        <dbReference type="Rhea" id="RHEA:27695"/>
    </physiologicalReaction>
</comment>
<comment type="cofactor">
    <cofactor evidence="1">
        <name>[2Fe-2S] cluster</name>
        <dbReference type="ChEBI" id="CHEBI:190135"/>
    </cofactor>
    <text evidence="1">Binds 1 [2Fe-2S] cluster per subunit. This cluster acts as a Lewis acid cofactor.</text>
</comment>
<comment type="cofactor">
    <cofactor evidence="1">
        <name>Mg(2+)</name>
        <dbReference type="ChEBI" id="CHEBI:18420"/>
    </cofactor>
</comment>
<comment type="pathway">
    <text evidence="1">Amino-acid biosynthesis; L-isoleucine biosynthesis; L-isoleucine from 2-oxobutanoate: step 3/4.</text>
</comment>
<comment type="pathway">
    <text evidence="1">Amino-acid biosynthesis; L-valine biosynthesis; L-valine from pyruvate: step 3/4.</text>
</comment>
<comment type="subunit">
    <text evidence="1">Homodimer.</text>
</comment>
<comment type="similarity">
    <text evidence="1">Belongs to the IlvD/Edd family.</text>
</comment>
<evidence type="ECO:0000255" key="1">
    <source>
        <dbReference type="HAMAP-Rule" id="MF_00012"/>
    </source>
</evidence>
<proteinExistence type="inferred from homology"/>
<keyword id="KW-0001">2Fe-2S</keyword>
<keyword id="KW-0028">Amino-acid biosynthesis</keyword>
<keyword id="KW-0100">Branched-chain amino acid biosynthesis</keyword>
<keyword id="KW-0408">Iron</keyword>
<keyword id="KW-0411">Iron-sulfur</keyword>
<keyword id="KW-0456">Lyase</keyword>
<keyword id="KW-0460">Magnesium</keyword>
<keyword id="KW-0479">Metal-binding</keyword>
<keyword id="KW-1185">Reference proteome</keyword>
<organism>
    <name type="scientific">Teredinibacter turnerae (strain ATCC 39867 / T7901)</name>
    <dbReference type="NCBI Taxonomy" id="377629"/>
    <lineage>
        <taxon>Bacteria</taxon>
        <taxon>Pseudomonadati</taxon>
        <taxon>Pseudomonadota</taxon>
        <taxon>Gammaproteobacteria</taxon>
        <taxon>Cellvibrionales</taxon>
        <taxon>Cellvibrionaceae</taxon>
        <taxon>Teredinibacter</taxon>
    </lineage>
</organism>
<name>ILVD_TERTT</name>
<reference key="1">
    <citation type="journal article" date="2009" name="PLoS ONE">
        <title>The complete genome of Teredinibacter turnerae T7901: an intracellular endosymbiont of marine wood-boring bivalves (shipworms).</title>
        <authorList>
            <person name="Yang J.C."/>
            <person name="Madupu R."/>
            <person name="Durkin A.S."/>
            <person name="Ekborg N.A."/>
            <person name="Pedamallu C.S."/>
            <person name="Hostetler J.B."/>
            <person name="Radune D."/>
            <person name="Toms B.S."/>
            <person name="Henrissat B."/>
            <person name="Coutinho P.M."/>
            <person name="Schwarz S."/>
            <person name="Field L."/>
            <person name="Trindade-Silva A.E."/>
            <person name="Soares C.A.G."/>
            <person name="Elshahawi S."/>
            <person name="Hanora A."/>
            <person name="Schmidt E.W."/>
            <person name="Haygood M.G."/>
            <person name="Posfai J."/>
            <person name="Benner J."/>
            <person name="Madinger C."/>
            <person name="Nove J."/>
            <person name="Anton B."/>
            <person name="Chaudhary K."/>
            <person name="Foster J."/>
            <person name="Holman A."/>
            <person name="Kumar S."/>
            <person name="Lessard P.A."/>
            <person name="Luyten Y.A."/>
            <person name="Slatko B."/>
            <person name="Wood N."/>
            <person name="Wu B."/>
            <person name="Teplitski M."/>
            <person name="Mougous J.D."/>
            <person name="Ward N."/>
            <person name="Eisen J.A."/>
            <person name="Badger J.H."/>
            <person name="Distel D.L."/>
        </authorList>
    </citation>
    <scope>NUCLEOTIDE SEQUENCE [LARGE SCALE GENOMIC DNA]</scope>
    <source>
        <strain>ATCC 39867 / T7901</strain>
    </source>
</reference>
<sequence length="612" mass="65310">MPEYRSRTTTAGRNMAGARALWRATGMKDDDFQKPIIAVVNSFTQFVPGHVHLKDLGQLVAREIEKAGAVAKEFNTIAVDDGIAMGHDGMLYSLPSRDIIADSVEYMVNAHCADAMVCISNCDKITPGMLMAAMRLNIPCIFVSGGPMEAGKTKLAEHNLDLVDAMVIAADDTASDETVAEYERSACPTCGSCSGMFTANSMNCLTEVLGLSLPGNGTVLATHADRRKLFEQAGQQIVAITRDYYEQDNVNVLPRSIGSKAAFENAITLDIAMGGSTNTILHLLAIAQEAEVDFDLKDIDRLSRKVPQLCKVAPNTQKYHIEDVHRAGGIYGILGELERGKLLDSSVPTVHSTTLSAAIAKWDIQQTSDDQVAHFYRAGPAGIPTQVAFSQDTRWPSLDGDRAQGCIRNVANAYSQEGGLAVLYGNIAADGCVVKTAGVDDSILVFEGPAHITESQDEAVANILAGKVQAGEVVIVRYEGPKGGPGMQEMLYPTSYLKSKGLGKNCALLTDGRFSGGTSGLSIGHVSPEAAAGGAIGLVRNGDIIRIDIPNRSIDVKLSDDELTARREAQNELGWKPAELRPRKVSAALKAYAKLATSADKGAVRDLSQLDD</sequence>
<accession>C5BMB1</accession>